<gene>
    <name type="ordered locus">EcHS_A1117</name>
</gene>
<dbReference type="EC" id="1.6.5.2" evidence="1"/>
<dbReference type="EMBL" id="CP000802">
    <property type="protein sequence ID" value="ABV05461.1"/>
    <property type="molecule type" value="Genomic_DNA"/>
</dbReference>
<dbReference type="SMR" id="A7ZYV7"/>
<dbReference type="KEGG" id="ecx:EcHS_A1117"/>
<dbReference type="HOGENOM" id="CLU_051402_0_2_6"/>
<dbReference type="GO" id="GO:0016020">
    <property type="term" value="C:membrane"/>
    <property type="evidence" value="ECO:0007669"/>
    <property type="project" value="TreeGrafter"/>
</dbReference>
<dbReference type="GO" id="GO:0050660">
    <property type="term" value="F:flavin adenine dinucleotide binding"/>
    <property type="evidence" value="ECO:0007669"/>
    <property type="project" value="UniProtKB-UniRule"/>
</dbReference>
<dbReference type="GO" id="GO:0010181">
    <property type="term" value="F:FMN binding"/>
    <property type="evidence" value="ECO:0007669"/>
    <property type="project" value="InterPro"/>
</dbReference>
<dbReference type="GO" id="GO:0051287">
    <property type="term" value="F:NAD binding"/>
    <property type="evidence" value="ECO:0007669"/>
    <property type="project" value="UniProtKB-UniRule"/>
</dbReference>
<dbReference type="GO" id="GO:0050136">
    <property type="term" value="F:NADH:ubiquinone reductase (non-electrogenic) activity"/>
    <property type="evidence" value="ECO:0007669"/>
    <property type="project" value="RHEA"/>
</dbReference>
<dbReference type="GO" id="GO:0050661">
    <property type="term" value="F:NADP binding"/>
    <property type="evidence" value="ECO:0007669"/>
    <property type="project" value="UniProtKB-UniRule"/>
</dbReference>
<dbReference type="GO" id="GO:0008753">
    <property type="term" value="F:NADPH dehydrogenase (quinone) activity"/>
    <property type="evidence" value="ECO:0007669"/>
    <property type="project" value="RHEA"/>
</dbReference>
<dbReference type="FunFam" id="3.40.50.360:FF:000004">
    <property type="entry name" value="NAD(P)H dehydrogenase (quinone)"/>
    <property type="match status" value="1"/>
</dbReference>
<dbReference type="Gene3D" id="3.40.50.360">
    <property type="match status" value="1"/>
</dbReference>
<dbReference type="HAMAP" id="MF_01017">
    <property type="entry name" value="NQOR"/>
    <property type="match status" value="1"/>
</dbReference>
<dbReference type="InterPro" id="IPR008254">
    <property type="entry name" value="Flavodoxin/NO_synth"/>
</dbReference>
<dbReference type="InterPro" id="IPR029039">
    <property type="entry name" value="Flavoprotein-like_sf"/>
</dbReference>
<dbReference type="InterPro" id="IPR010089">
    <property type="entry name" value="Flavoprotein_WrbA-like"/>
</dbReference>
<dbReference type="InterPro" id="IPR005025">
    <property type="entry name" value="FMN_Rdtase-like_dom"/>
</dbReference>
<dbReference type="InterPro" id="IPR037513">
    <property type="entry name" value="NQO"/>
</dbReference>
<dbReference type="NCBIfam" id="TIGR01755">
    <property type="entry name" value="flav_wrbA"/>
    <property type="match status" value="1"/>
</dbReference>
<dbReference type="NCBIfam" id="NF002999">
    <property type="entry name" value="PRK03767.1"/>
    <property type="match status" value="1"/>
</dbReference>
<dbReference type="PANTHER" id="PTHR30546">
    <property type="entry name" value="FLAVODOXIN-RELATED PROTEIN WRBA-RELATED"/>
    <property type="match status" value="1"/>
</dbReference>
<dbReference type="PANTHER" id="PTHR30546:SF23">
    <property type="entry name" value="FLAVOPROTEIN-LIKE PROTEIN YCP4-RELATED"/>
    <property type="match status" value="1"/>
</dbReference>
<dbReference type="Pfam" id="PF03358">
    <property type="entry name" value="FMN_red"/>
    <property type="match status" value="1"/>
</dbReference>
<dbReference type="SUPFAM" id="SSF52218">
    <property type="entry name" value="Flavoproteins"/>
    <property type="match status" value="1"/>
</dbReference>
<dbReference type="PROSITE" id="PS50902">
    <property type="entry name" value="FLAVODOXIN_LIKE"/>
    <property type="match status" value="1"/>
</dbReference>
<accession>A7ZYV7</accession>
<comment type="catalytic activity">
    <reaction evidence="1">
        <text>a quinone + NADH + H(+) = a quinol + NAD(+)</text>
        <dbReference type="Rhea" id="RHEA:46160"/>
        <dbReference type="ChEBI" id="CHEBI:15378"/>
        <dbReference type="ChEBI" id="CHEBI:24646"/>
        <dbReference type="ChEBI" id="CHEBI:57540"/>
        <dbReference type="ChEBI" id="CHEBI:57945"/>
        <dbReference type="ChEBI" id="CHEBI:132124"/>
        <dbReference type="EC" id="1.6.5.2"/>
    </reaction>
</comment>
<comment type="catalytic activity">
    <reaction evidence="1">
        <text>a quinone + NADPH + H(+) = a quinol + NADP(+)</text>
        <dbReference type="Rhea" id="RHEA:46164"/>
        <dbReference type="ChEBI" id="CHEBI:15378"/>
        <dbReference type="ChEBI" id="CHEBI:24646"/>
        <dbReference type="ChEBI" id="CHEBI:57783"/>
        <dbReference type="ChEBI" id="CHEBI:58349"/>
        <dbReference type="ChEBI" id="CHEBI:132124"/>
        <dbReference type="EC" id="1.6.5.2"/>
    </reaction>
</comment>
<comment type="cofactor">
    <cofactor evidence="1">
        <name>FMN</name>
        <dbReference type="ChEBI" id="CHEBI:58210"/>
    </cofactor>
    <text evidence="1">Binds 1 FMN per monomer.</text>
</comment>
<comment type="similarity">
    <text evidence="1">Belongs to the WrbA family.</text>
</comment>
<proteinExistence type="inferred from homology"/>
<evidence type="ECO:0000255" key="1">
    <source>
        <dbReference type="HAMAP-Rule" id="MF_01017"/>
    </source>
</evidence>
<keyword id="KW-0285">Flavoprotein</keyword>
<keyword id="KW-0288">FMN</keyword>
<keyword id="KW-0520">NAD</keyword>
<keyword id="KW-0521">NADP</keyword>
<keyword id="KW-0547">Nucleotide-binding</keyword>
<keyword id="KW-0560">Oxidoreductase</keyword>
<reference key="1">
    <citation type="journal article" date="2008" name="J. Bacteriol.">
        <title>The pangenome structure of Escherichia coli: comparative genomic analysis of E. coli commensal and pathogenic isolates.</title>
        <authorList>
            <person name="Rasko D.A."/>
            <person name="Rosovitz M.J."/>
            <person name="Myers G.S.A."/>
            <person name="Mongodin E.F."/>
            <person name="Fricke W.F."/>
            <person name="Gajer P."/>
            <person name="Crabtree J."/>
            <person name="Sebaihia M."/>
            <person name="Thomson N.R."/>
            <person name="Chaudhuri R."/>
            <person name="Henderson I.R."/>
            <person name="Sperandio V."/>
            <person name="Ravel J."/>
        </authorList>
    </citation>
    <scope>NUCLEOTIDE SEQUENCE [LARGE SCALE GENOMIC DNA]</scope>
    <source>
        <strain>HS</strain>
    </source>
</reference>
<name>NQOR_ECOHS</name>
<protein>
    <recommendedName>
        <fullName evidence="1">NAD(P)H dehydrogenase (quinone)</fullName>
        <ecNumber evidence="1">1.6.5.2</ecNumber>
    </recommendedName>
    <alternativeName>
        <fullName>Flavoprotein WrbA</fullName>
    </alternativeName>
    <alternativeName>
        <fullName evidence="1">NAD(P)H:quinone oxidoreductase</fullName>
        <shortName evidence="1">NQO</shortName>
    </alternativeName>
</protein>
<sequence>MAKVLVLYYSMYGHIETMARAVAEGASKVDGAEVVVKRVPETMPPQLFEKAGGKTQTAPVATPQELADYDAIIFGTPTRFGNMSGQMRTFLDQTGGLWASGALYGKLASVFSSTGTGGGQEQTITSTWTTLAHHGMVIVPIGYAAQELFDVSQVRGGTPYGATTIAGGDGSRQPSQEELSIARYQGEYVAGLAVKLNG</sequence>
<organism>
    <name type="scientific">Escherichia coli O9:H4 (strain HS)</name>
    <dbReference type="NCBI Taxonomy" id="331112"/>
    <lineage>
        <taxon>Bacteria</taxon>
        <taxon>Pseudomonadati</taxon>
        <taxon>Pseudomonadota</taxon>
        <taxon>Gammaproteobacteria</taxon>
        <taxon>Enterobacterales</taxon>
        <taxon>Enterobacteriaceae</taxon>
        <taxon>Escherichia</taxon>
    </lineage>
</organism>
<feature type="chain" id="PRO_1000084137" description="NAD(P)H dehydrogenase (quinone)">
    <location>
        <begin position="1"/>
        <end position="198"/>
    </location>
</feature>
<feature type="domain" description="Flavodoxin-like" evidence="1">
    <location>
        <begin position="4"/>
        <end position="189"/>
    </location>
</feature>
<feature type="binding site" evidence="1">
    <location>
        <begin position="10"/>
        <end position="15"/>
    </location>
    <ligand>
        <name>FMN</name>
        <dbReference type="ChEBI" id="CHEBI:58210"/>
    </ligand>
</feature>
<feature type="binding site" evidence="1">
    <location>
        <position position="12"/>
    </location>
    <ligand>
        <name>NAD(+)</name>
        <dbReference type="ChEBI" id="CHEBI:57540"/>
    </ligand>
</feature>
<feature type="binding site" evidence="1">
    <location>
        <begin position="78"/>
        <end position="80"/>
    </location>
    <ligand>
        <name>FMN</name>
        <dbReference type="ChEBI" id="CHEBI:58210"/>
    </ligand>
</feature>
<feature type="binding site" evidence="1">
    <location>
        <position position="98"/>
    </location>
    <ligand>
        <name>substrate</name>
    </ligand>
</feature>
<feature type="binding site" evidence="1">
    <location>
        <begin position="113"/>
        <end position="118"/>
    </location>
    <ligand>
        <name>FMN</name>
        <dbReference type="ChEBI" id="CHEBI:58210"/>
    </ligand>
</feature>
<feature type="binding site" evidence="1">
    <location>
        <position position="133"/>
    </location>
    <ligand>
        <name>FMN</name>
        <dbReference type="ChEBI" id="CHEBI:58210"/>
    </ligand>
</feature>